<comment type="function">
    <text evidence="1">May have a role related to the spindle integrity, which is essential for proper chromosome segregation.</text>
</comment>
<comment type="subcellular location">
    <subcellularLocation>
        <location evidence="1">Cytoplasm</location>
        <location evidence="1">Cytoskeleton</location>
    </subcellularLocation>
    <subcellularLocation>
        <location evidence="1">Cytoplasm</location>
        <location evidence="1">Cytoskeleton</location>
        <location evidence="1">Spindle</location>
    </subcellularLocation>
</comment>
<comment type="similarity">
    <text evidence="3">Belongs to the SHE1 family.</text>
</comment>
<proteinExistence type="inferred from homology"/>
<organism>
    <name type="scientific">Candida glabrata (strain ATCC 2001 / BCRC 20586 / JCM 3761 / NBRC 0622 / NRRL Y-65 / CBS 138)</name>
    <name type="common">Yeast</name>
    <name type="synonym">Nakaseomyces glabratus</name>
    <dbReference type="NCBI Taxonomy" id="284593"/>
    <lineage>
        <taxon>Eukaryota</taxon>
        <taxon>Fungi</taxon>
        <taxon>Dikarya</taxon>
        <taxon>Ascomycota</taxon>
        <taxon>Saccharomycotina</taxon>
        <taxon>Saccharomycetes</taxon>
        <taxon>Saccharomycetales</taxon>
        <taxon>Saccharomycetaceae</taxon>
        <taxon>Nakaseomyces</taxon>
    </lineage>
</organism>
<dbReference type="EMBL" id="CR380952">
    <property type="protein sequence ID" value="CAG59079.1"/>
    <property type="molecule type" value="Genomic_DNA"/>
</dbReference>
<dbReference type="RefSeq" id="XP_446155.1">
    <property type="nucleotide sequence ID" value="XM_446155.1"/>
</dbReference>
<dbReference type="FunCoup" id="Q6FUD9">
    <property type="interactions" value="29"/>
</dbReference>
<dbReference type="EnsemblFungi" id="CAGL0F04235g-T">
    <property type="protein sequence ID" value="CAGL0F04235g-T-p1"/>
    <property type="gene ID" value="CAGL0F04235g"/>
</dbReference>
<dbReference type="KEGG" id="cgr:2887758"/>
<dbReference type="CGD" id="CAL0131164">
    <property type="gene designation" value="CAGL0F04235g"/>
</dbReference>
<dbReference type="VEuPathDB" id="FungiDB:CAGL0F04235g"/>
<dbReference type="HOGENOM" id="CLU_986942_0_0_1"/>
<dbReference type="InParanoid" id="Q6FUD9"/>
<dbReference type="OMA" id="KINSAHR"/>
<dbReference type="Proteomes" id="UP000002428">
    <property type="component" value="Chromosome F"/>
</dbReference>
<dbReference type="GO" id="GO:0005935">
    <property type="term" value="C:cellular bud neck"/>
    <property type="evidence" value="ECO:0007669"/>
    <property type="project" value="EnsemblFungi"/>
</dbReference>
<dbReference type="GO" id="GO:0005737">
    <property type="term" value="C:cytoplasm"/>
    <property type="evidence" value="ECO:0007669"/>
    <property type="project" value="UniProtKB-KW"/>
</dbReference>
<dbReference type="GO" id="GO:0005880">
    <property type="term" value="C:nuclear microtubule"/>
    <property type="evidence" value="ECO:0007669"/>
    <property type="project" value="EnsemblFungi"/>
</dbReference>
<dbReference type="GO" id="GO:0005819">
    <property type="term" value="C:spindle"/>
    <property type="evidence" value="ECO:0007669"/>
    <property type="project" value="UniProtKB-SubCell"/>
</dbReference>
<dbReference type="GO" id="GO:0008017">
    <property type="term" value="F:microtubule binding"/>
    <property type="evidence" value="ECO:0007669"/>
    <property type="project" value="EnsemblFungi"/>
</dbReference>
<dbReference type="GO" id="GO:0051301">
    <property type="term" value="P:cell division"/>
    <property type="evidence" value="ECO:0007669"/>
    <property type="project" value="UniProtKB-KW"/>
</dbReference>
<dbReference type="GO" id="GO:0040001">
    <property type="term" value="P:establishment of mitotic spindle localization"/>
    <property type="evidence" value="ECO:0007669"/>
    <property type="project" value="EnsemblFungi"/>
</dbReference>
<dbReference type="GO" id="GO:0000022">
    <property type="term" value="P:mitotic spindle elongation"/>
    <property type="evidence" value="ECO:0007669"/>
    <property type="project" value="EnsemblFungi"/>
</dbReference>
<dbReference type="InterPro" id="IPR031401">
    <property type="entry name" value="She1"/>
</dbReference>
<dbReference type="Pfam" id="PF17077">
    <property type="entry name" value="Msap1"/>
    <property type="match status" value="2"/>
</dbReference>
<sequence>MNENDSNEIIEQLGISKRLGNSILDELNQRASETNPLLRKHEDTDNEEERPAESTPTAHNLVFNKVHNLNFENLTDKDPDFTIHNDPLHKKKYKYSPIKRVPEVNEITKKIRRLKLRSSSNLSSSGGSPEKRTTNASNVEQKTELAPLKTPNFLRPTFNSMNRAKDTSHKVESSRRTYGNLLPPTSRAIPAVKEAVRQDYTKRSISIQLPRKSPAPPKIPEQRSISDSSSNVFERLYKQTTMSRSNSMAFDQQNRKQLPKSRTITGLSSVVGDKHRTFPSKH</sequence>
<keyword id="KW-0131">Cell cycle</keyword>
<keyword id="KW-0132">Cell division</keyword>
<keyword id="KW-0159">Chromosome partition</keyword>
<keyword id="KW-0963">Cytoplasm</keyword>
<keyword id="KW-0206">Cytoskeleton</keyword>
<keyword id="KW-0498">Mitosis</keyword>
<keyword id="KW-1185">Reference proteome</keyword>
<protein>
    <recommendedName>
        <fullName>Mitotic spindle-associated protein SHE1</fullName>
    </recommendedName>
</protein>
<feature type="chain" id="PRO_0000333421" description="Mitotic spindle-associated protein SHE1">
    <location>
        <begin position="1"/>
        <end position="282"/>
    </location>
</feature>
<feature type="region of interest" description="Disordered" evidence="2">
    <location>
        <begin position="28"/>
        <end position="58"/>
    </location>
</feature>
<feature type="region of interest" description="Disordered" evidence="2">
    <location>
        <begin position="115"/>
        <end position="185"/>
    </location>
</feature>
<feature type="region of interest" description="Disordered" evidence="2">
    <location>
        <begin position="207"/>
        <end position="229"/>
    </location>
</feature>
<feature type="region of interest" description="Disordered" evidence="2">
    <location>
        <begin position="242"/>
        <end position="282"/>
    </location>
</feature>
<feature type="compositionally biased region" description="Low complexity" evidence="2">
    <location>
        <begin position="117"/>
        <end position="128"/>
    </location>
</feature>
<feature type="compositionally biased region" description="Basic and acidic residues" evidence="2">
    <location>
        <begin position="163"/>
        <end position="175"/>
    </location>
</feature>
<feature type="compositionally biased region" description="Polar residues" evidence="2">
    <location>
        <begin position="242"/>
        <end position="268"/>
    </location>
</feature>
<evidence type="ECO:0000250" key="1"/>
<evidence type="ECO:0000256" key="2">
    <source>
        <dbReference type="SAM" id="MobiDB-lite"/>
    </source>
</evidence>
<evidence type="ECO:0000305" key="3"/>
<gene>
    <name type="primary">SHE1</name>
    <name type="ordered locus">CAGL0F04235g</name>
</gene>
<name>SHE1_CANGA</name>
<reference key="1">
    <citation type="journal article" date="2004" name="Nature">
        <title>Genome evolution in yeasts.</title>
        <authorList>
            <person name="Dujon B."/>
            <person name="Sherman D."/>
            <person name="Fischer G."/>
            <person name="Durrens P."/>
            <person name="Casaregola S."/>
            <person name="Lafontaine I."/>
            <person name="de Montigny J."/>
            <person name="Marck C."/>
            <person name="Neuveglise C."/>
            <person name="Talla E."/>
            <person name="Goffard N."/>
            <person name="Frangeul L."/>
            <person name="Aigle M."/>
            <person name="Anthouard V."/>
            <person name="Babour A."/>
            <person name="Barbe V."/>
            <person name="Barnay S."/>
            <person name="Blanchin S."/>
            <person name="Beckerich J.-M."/>
            <person name="Beyne E."/>
            <person name="Bleykasten C."/>
            <person name="Boisrame A."/>
            <person name="Boyer J."/>
            <person name="Cattolico L."/>
            <person name="Confanioleri F."/>
            <person name="de Daruvar A."/>
            <person name="Despons L."/>
            <person name="Fabre E."/>
            <person name="Fairhead C."/>
            <person name="Ferry-Dumazet H."/>
            <person name="Groppi A."/>
            <person name="Hantraye F."/>
            <person name="Hennequin C."/>
            <person name="Jauniaux N."/>
            <person name="Joyet P."/>
            <person name="Kachouri R."/>
            <person name="Kerrest A."/>
            <person name="Koszul R."/>
            <person name="Lemaire M."/>
            <person name="Lesur I."/>
            <person name="Ma L."/>
            <person name="Muller H."/>
            <person name="Nicaud J.-M."/>
            <person name="Nikolski M."/>
            <person name="Oztas S."/>
            <person name="Ozier-Kalogeropoulos O."/>
            <person name="Pellenz S."/>
            <person name="Potier S."/>
            <person name="Richard G.-F."/>
            <person name="Straub M.-L."/>
            <person name="Suleau A."/>
            <person name="Swennen D."/>
            <person name="Tekaia F."/>
            <person name="Wesolowski-Louvel M."/>
            <person name="Westhof E."/>
            <person name="Wirth B."/>
            <person name="Zeniou-Meyer M."/>
            <person name="Zivanovic Y."/>
            <person name="Bolotin-Fukuhara M."/>
            <person name="Thierry A."/>
            <person name="Bouchier C."/>
            <person name="Caudron B."/>
            <person name="Scarpelli C."/>
            <person name="Gaillardin C."/>
            <person name="Weissenbach J."/>
            <person name="Wincker P."/>
            <person name="Souciet J.-L."/>
        </authorList>
    </citation>
    <scope>NUCLEOTIDE SEQUENCE [LARGE SCALE GENOMIC DNA]</scope>
    <source>
        <strain>ATCC 2001 / BCRC 20586 / JCM 3761 / NBRC 0622 / NRRL Y-65 / CBS 138</strain>
    </source>
</reference>
<accession>Q6FUD9</accession>